<accession>B2STJ5</accession>
<sequence length="439" mass="47142">MKKPLRWLAALTVLLLPLSALAQQQGLTIDIVGGSASATPIAVIPMPYQGSDTAPQTDVSAVVGADLDRSGQFRTLPAAQIVEKPTRGTEVQFQTWRTLKQNYIVVGRVMDAGEGAYRVEYELFDVAKGERMLGLAMTARANAMRDVSHQMADAIYEKITGVRGAFWTRIAYVTASGKGGAMRYALMVADSDGYNPQTIVRSAEPLLSPNWSPDGKKLAYVSFERGNSSIYLQDIATGARELVSSFRGINGAPSFSPDGRRLALALSRSGNPEIYVMDLGSKQLTQLTNHFGIDTEPTWAPDGGSIYFTSDRGGRPQIYQVAASGGSANRVTFQGNYNATASVSFDGKKIAVAQGSGNTYRIAMMDRSLGSPSWSTLSPGSLDESPSFAPNASMVLYAAREGGRGVLYAVSSDARVRQRLVLADGDVREPAWGPYRTAH</sequence>
<proteinExistence type="inferred from homology"/>
<comment type="function">
    <text evidence="1">Part of the Tol-Pal system, which plays a role in outer membrane invagination during cell division and is important for maintaining outer membrane integrity.</text>
</comment>
<comment type="subunit">
    <text evidence="1">The Tol-Pal system is composed of five core proteins: the inner membrane proteins TolA, TolQ and TolR, the periplasmic protein TolB and the outer membrane protein Pal. They form a network linking the inner and outer membranes and the peptidoglycan layer.</text>
</comment>
<comment type="subcellular location">
    <subcellularLocation>
        <location evidence="1">Periplasm</location>
    </subcellularLocation>
</comment>
<comment type="similarity">
    <text evidence="1">Belongs to the TolB family.</text>
</comment>
<keyword id="KW-0131">Cell cycle</keyword>
<keyword id="KW-0132">Cell division</keyword>
<keyword id="KW-0574">Periplasm</keyword>
<keyword id="KW-0732">Signal</keyword>
<evidence type="ECO:0000255" key="1">
    <source>
        <dbReference type="HAMAP-Rule" id="MF_00671"/>
    </source>
</evidence>
<feature type="signal peptide" evidence="1">
    <location>
        <begin position="1"/>
        <end position="22"/>
    </location>
</feature>
<feature type="chain" id="PRO_1000131541" description="Tol-Pal system protein TolB" evidence="1">
    <location>
        <begin position="23"/>
        <end position="439"/>
    </location>
</feature>
<organism>
    <name type="scientific">Xanthomonas oryzae pv. oryzae (strain PXO99A)</name>
    <dbReference type="NCBI Taxonomy" id="360094"/>
    <lineage>
        <taxon>Bacteria</taxon>
        <taxon>Pseudomonadati</taxon>
        <taxon>Pseudomonadota</taxon>
        <taxon>Gammaproteobacteria</taxon>
        <taxon>Lysobacterales</taxon>
        <taxon>Lysobacteraceae</taxon>
        <taxon>Xanthomonas</taxon>
    </lineage>
</organism>
<gene>
    <name evidence="1" type="primary">tolB</name>
    <name type="ordered locus">PXO_01564</name>
</gene>
<protein>
    <recommendedName>
        <fullName evidence="1">Tol-Pal system protein TolB</fullName>
    </recommendedName>
</protein>
<dbReference type="EMBL" id="CP000967">
    <property type="protein sequence ID" value="ACD59825.1"/>
    <property type="molecule type" value="Genomic_DNA"/>
</dbReference>
<dbReference type="RefSeq" id="WP_012445349.1">
    <property type="nucleotide sequence ID" value="NC_010717.2"/>
</dbReference>
<dbReference type="SMR" id="B2STJ5"/>
<dbReference type="KEGG" id="xop:PXO_01564"/>
<dbReference type="eggNOG" id="COG0823">
    <property type="taxonomic scope" value="Bacteria"/>
</dbReference>
<dbReference type="HOGENOM" id="CLU_047123_0_0_6"/>
<dbReference type="Proteomes" id="UP000001740">
    <property type="component" value="Chromosome"/>
</dbReference>
<dbReference type="GO" id="GO:0042597">
    <property type="term" value="C:periplasmic space"/>
    <property type="evidence" value="ECO:0007669"/>
    <property type="project" value="UniProtKB-SubCell"/>
</dbReference>
<dbReference type="GO" id="GO:0051301">
    <property type="term" value="P:cell division"/>
    <property type="evidence" value="ECO:0007669"/>
    <property type="project" value="UniProtKB-UniRule"/>
</dbReference>
<dbReference type="GO" id="GO:0017038">
    <property type="term" value="P:protein import"/>
    <property type="evidence" value="ECO:0007669"/>
    <property type="project" value="InterPro"/>
</dbReference>
<dbReference type="Gene3D" id="2.120.10.30">
    <property type="entry name" value="TolB, C-terminal domain"/>
    <property type="match status" value="1"/>
</dbReference>
<dbReference type="Gene3D" id="3.40.50.10070">
    <property type="entry name" value="TolB, N-terminal domain"/>
    <property type="match status" value="1"/>
</dbReference>
<dbReference type="HAMAP" id="MF_00671">
    <property type="entry name" value="TolB"/>
    <property type="match status" value="1"/>
</dbReference>
<dbReference type="InterPro" id="IPR011042">
    <property type="entry name" value="6-blade_b-propeller_TolB-like"/>
</dbReference>
<dbReference type="InterPro" id="IPR011659">
    <property type="entry name" value="PD40"/>
</dbReference>
<dbReference type="InterPro" id="IPR014167">
    <property type="entry name" value="Tol-Pal_TolB"/>
</dbReference>
<dbReference type="InterPro" id="IPR007195">
    <property type="entry name" value="TolB_N"/>
</dbReference>
<dbReference type="NCBIfam" id="TIGR02800">
    <property type="entry name" value="propeller_TolB"/>
    <property type="match status" value="1"/>
</dbReference>
<dbReference type="PANTHER" id="PTHR36842:SF1">
    <property type="entry name" value="PROTEIN TOLB"/>
    <property type="match status" value="1"/>
</dbReference>
<dbReference type="PANTHER" id="PTHR36842">
    <property type="entry name" value="PROTEIN TOLB HOMOLOG"/>
    <property type="match status" value="1"/>
</dbReference>
<dbReference type="Pfam" id="PF07676">
    <property type="entry name" value="PD40"/>
    <property type="match status" value="3"/>
</dbReference>
<dbReference type="Pfam" id="PF04052">
    <property type="entry name" value="TolB_N"/>
    <property type="match status" value="1"/>
</dbReference>
<dbReference type="SUPFAM" id="SSF52964">
    <property type="entry name" value="TolB, N-terminal domain"/>
    <property type="match status" value="1"/>
</dbReference>
<dbReference type="SUPFAM" id="SSF69304">
    <property type="entry name" value="Tricorn protease N-terminal domain"/>
    <property type="match status" value="1"/>
</dbReference>
<name>TOLB_XANOP</name>
<reference key="1">
    <citation type="journal article" date="2008" name="BMC Genomics">
        <title>Genome sequence and rapid evolution of the rice pathogen Xanthomonas oryzae pv. oryzae PXO99A.</title>
        <authorList>
            <person name="Salzberg S.L."/>
            <person name="Sommer D.D."/>
            <person name="Schatz M.C."/>
            <person name="Phillippy A.M."/>
            <person name="Rabinowicz P.D."/>
            <person name="Tsuge S."/>
            <person name="Furutani A."/>
            <person name="Ochiai H."/>
            <person name="Delcher A.L."/>
            <person name="Kelley D."/>
            <person name="Madupu R."/>
            <person name="Puiu D."/>
            <person name="Radune D."/>
            <person name="Shumway M."/>
            <person name="Trapnell C."/>
            <person name="Aparna G."/>
            <person name="Jha G."/>
            <person name="Pandey A."/>
            <person name="Patil P.B."/>
            <person name="Ishihara H."/>
            <person name="Meyer D.F."/>
            <person name="Szurek B."/>
            <person name="Verdier V."/>
            <person name="Koebnik R."/>
            <person name="Dow J.M."/>
            <person name="Ryan R.P."/>
            <person name="Hirata H."/>
            <person name="Tsuyumu S."/>
            <person name="Won Lee S."/>
            <person name="Seo Y.-S."/>
            <person name="Sriariyanum M."/>
            <person name="Ronald P.C."/>
            <person name="Sonti R.V."/>
            <person name="Van Sluys M.-A."/>
            <person name="Leach J.E."/>
            <person name="White F.F."/>
            <person name="Bogdanove A.J."/>
        </authorList>
    </citation>
    <scope>NUCLEOTIDE SEQUENCE [LARGE SCALE GENOMIC DNA]</scope>
    <source>
        <strain>PXO99A</strain>
    </source>
</reference>